<reference key="1">
    <citation type="submission" date="1993-10" db="EMBL/GenBank/DDBJ databases">
        <title>Automated multiplex sequencing of the E.coli genome.</title>
        <authorList>
            <person name="Richterich P."/>
            <person name="Lakey N."/>
            <person name="Gryan G."/>
            <person name="Jaehn L."/>
            <person name="Mintz L."/>
            <person name="Robison K."/>
            <person name="Church G.M."/>
        </authorList>
    </citation>
    <scope>NUCLEOTIDE SEQUENCE [LARGE SCALE GENOMIC DNA]</scope>
    <source>
        <strain>K12 / BHB2600</strain>
    </source>
</reference>
<reference key="2">
    <citation type="journal article" date="1997" name="Science">
        <title>The complete genome sequence of Escherichia coli K-12.</title>
        <authorList>
            <person name="Blattner F.R."/>
            <person name="Plunkett G. III"/>
            <person name="Bloch C.A."/>
            <person name="Perna N.T."/>
            <person name="Burland V."/>
            <person name="Riley M."/>
            <person name="Collado-Vides J."/>
            <person name="Glasner J.D."/>
            <person name="Rode C.K."/>
            <person name="Mayhew G.F."/>
            <person name="Gregor J."/>
            <person name="Davis N.W."/>
            <person name="Kirkpatrick H.A."/>
            <person name="Goeden M.A."/>
            <person name="Rose D.J."/>
            <person name="Mau B."/>
            <person name="Shao Y."/>
        </authorList>
    </citation>
    <scope>NUCLEOTIDE SEQUENCE [LARGE SCALE GENOMIC DNA]</scope>
    <source>
        <strain>K12 / MG1655 / ATCC 47076</strain>
    </source>
</reference>
<reference key="3">
    <citation type="journal article" date="2006" name="Mol. Syst. Biol.">
        <title>Highly accurate genome sequences of Escherichia coli K-12 strains MG1655 and W3110.</title>
        <authorList>
            <person name="Hayashi K."/>
            <person name="Morooka N."/>
            <person name="Yamamoto Y."/>
            <person name="Fujita K."/>
            <person name="Isono K."/>
            <person name="Choi S."/>
            <person name="Ohtsubo E."/>
            <person name="Baba T."/>
            <person name="Wanner B.L."/>
            <person name="Mori H."/>
            <person name="Horiuchi T."/>
        </authorList>
    </citation>
    <scope>NUCLEOTIDE SEQUENCE [LARGE SCALE GENOMIC DNA]</scope>
    <source>
        <strain>K12 / W3110 / ATCC 27325 / DSM 5911</strain>
    </source>
</reference>
<protein>
    <recommendedName>
        <fullName evidence="1">UPF0352 protein YejL</fullName>
    </recommendedName>
</protein>
<comment type="similarity">
    <text evidence="1">Belongs to the UPF0352 family.</text>
</comment>
<evidence type="ECO:0000255" key="1">
    <source>
        <dbReference type="HAMAP-Rule" id="MF_00816"/>
    </source>
</evidence>
<evidence type="ECO:0007829" key="2">
    <source>
        <dbReference type="PDB" id="2JRX"/>
    </source>
</evidence>
<gene>
    <name evidence="1" type="primary">yejL</name>
    <name type="ordered locus">b2187</name>
    <name type="ordered locus">JW2175</name>
</gene>
<name>YEJL_ECOLI</name>
<keyword id="KW-0002">3D-structure</keyword>
<keyword id="KW-1185">Reference proteome</keyword>
<dbReference type="EMBL" id="U00008">
    <property type="protein sequence ID" value="AAA16383.1"/>
    <property type="molecule type" value="Genomic_DNA"/>
</dbReference>
<dbReference type="EMBL" id="U00096">
    <property type="protein sequence ID" value="AAC75248.1"/>
    <property type="molecule type" value="Genomic_DNA"/>
</dbReference>
<dbReference type="EMBL" id="AP009048">
    <property type="protein sequence ID" value="BAE76652.1"/>
    <property type="molecule type" value="Genomic_DNA"/>
</dbReference>
<dbReference type="PIR" id="B64988">
    <property type="entry name" value="B64988"/>
</dbReference>
<dbReference type="RefSeq" id="NP_416692.1">
    <property type="nucleotide sequence ID" value="NC_000913.3"/>
</dbReference>
<dbReference type="RefSeq" id="WP_001135667.1">
    <property type="nucleotide sequence ID" value="NZ_STEB01000002.1"/>
</dbReference>
<dbReference type="PDB" id="2JRX">
    <property type="method" value="NMR"/>
    <property type="chains" value="A/B=1-75"/>
</dbReference>
<dbReference type="PDBsum" id="2JRX"/>
<dbReference type="SMR" id="P0AD24"/>
<dbReference type="BioGRID" id="4260477">
    <property type="interactions" value="56"/>
</dbReference>
<dbReference type="DIP" id="DIP-48181N"/>
<dbReference type="FunCoup" id="P0AD24">
    <property type="interactions" value="90"/>
</dbReference>
<dbReference type="STRING" id="511145.b2187"/>
<dbReference type="jPOST" id="P0AD24"/>
<dbReference type="PaxDb" id="511145-b2187"/>
<dbReference type="EnsemblBacteria" id="AAC75248">
    <property type="protein sequence ID" value="AAC75248"/>
    <property type="gene ID" value="b2187"/>
</dbReference>
<dbReference type="GeneID" id="946694"/>
<dbReference type="KEGG" id="ecj:JW2175"/>
<dbReference type="KEGG" id="eco:b2187"/>
<dbReference type="KEGG" id="ecoc:C3026_12230"/>
<dbReference type="PATRIC" id="fig|511145.12.peg.2276"/>
<dbReference type="EchoBASE" id="EB1977"/>
<dbReference type="eggNOG" id="COG3082">
    <property type="taxonomic scope" value="Bacteria"/>
</dbReference>
<dbReference type="HOGENOM" id="CLU_175457_0_0_6"/>
<dbReference type="InParanoid" id="P0AD24"/>
<dbReference type="OMA" id="HQAPTDL"/>
<dbReference type="OrthoDB" id="5771474at2"/>
<dbReference type="PhylomeDB" id="P0AD24"/>
<dbReference type="BioCyc" id="EcoCyc:EG12043-MONOMER"/>
<dbReference type="EvolutionaryTrace" id="P0AD24"/>
<dbReference type="PRO" id="PR:P0AD24"/>
<dbReference type="Proteomes" id="UP000000625">
    <property type="component" value="Chromosome"/>
</dbReference>
<dbReference type="GO" id="GO:0005829">
    <property type="term" value="C:cytosol"/>
    <property type="evidence" value="ECO:0000314"/>
    <property type="project" value="EcoCyc"/>
</dbReference>
<dbReference type="FunFam" id="1.10.3390.10:FF:000001">
    <property type="entry name" value="UPF0352 protein YejL"/>
    <property type="match status" value="1"/>
</dbReference>
<dbReference type="Gene3D" id="1.10.3390.10">
    <property type="entry name" value="YejL-like"/>
    <property type="match status" value="1"/>
</dbReference>
<dbReference type="HAMAP" id="MF_00816">
    <property type="entry name" value="UPF0352"/>
    <property type="match status" value="1"/>
</dbReference>
<dbReference type="InterPro" id="IPR009857">
    <property type="entry name" value="UPF0352"/>
</dbReference>
<dbReference type="InterPro" id="IPR023202">
    <property type="entry name" value="YejL_sf"/>
</dbReference>
<dbReference type="NCBIfam" id="NF010242">
    <property type="entry name" value="PRK13689.1"/>
    <property type="match status" value="1"/>
</dbReference>
<dbReference type="Pfam" id="PF07208">
    <property type="entry name" value="DUF1414"/>
    <property type="match status" value="1"/>
</dbReference>
<dbReference type="PIRSF" id="PIRSF006188">
    <property type="entry name" value="UCP006188"/>
    <property type="match status" value="1"/>
</dbReference>
<dbReference type="SUPFAM" id="SSF158651">
    <property type="entry name" value="YejL-like"/>
    <property type="match status" value="1"/>
</dbReference>
<sequence length="75" mass="8288">MPQISRYSDEQVEQLLAELLNVLEKHKAPTDLSLMVLGNMVTNLINTSIAPAQRQAIANSFARALQSSINEDKAH</sequence>
<organism>
    <name type="scientific">Escherichia coli (strain K12)</name>
    <dbReference type="NCBI Taxonomy" id="83333"/>
    <lineage>
        <taxon>Bacteria</taxon>
        <taxon>Pseudomonadati</taxon>
        <taxon>Pseudomonadota</taxon>
        <taxon>Gammaproteobacteria</taxon>
        <taxon>Enterobacterales</taxon>
        <taxon>Enterobacteriaceae</taxon>
        <taxon>Escherichia</taxon>
    </lineage>
</organism>
<accession>P0AD24</accession>
<accession>P33921</accession>
<accession>Q2MAQ4</accession>
<feature type="chain" id="PRO_0000201785" description="UPF0352 protein YejL">
    <location>
        <begin position="1"/>
        <end position="75"/>
    </location>
</feature>
<feature type="helix" evidence="2">
    <location>
        <begin position="9"/>
        <end position="26"/>
    </location>
</feature>
<feature type="helix" evidence="2">
    <location>
        <begin position="30"/>
        <end position="48"/>
    </location>
</feature>
<feature type="helix" evidence="2">
    <location>
        <begin position="54"/>
        <end position="68"/>
    </location>
</feature>
<proteinExistence type="evidence at protein level"/>